<evidence type="ECO:0000255" key="1">
    <source>
        <dbReference type="HAMAP-Rule" id="MF_00708"/>
    </source>
</evidence>
<sequence length="130" mass="14415">MTTQRKPYVRTMTPTWWQKLGFYRFYMLREGTSVPAVWFSIVLIYGVFALKGGVDSWAGFVGFLQNPLVLLINFVALLAALLHTKTWFDLAPKAANIVVNSEKMGPGPIVKTLWAVTVVASVVILAVALV</sequence>
<name>FRDC_SERP5</name>
<accession>A8G8T5</accession>
<feature type="chain" id="PRO_1000062066" description="Fumarate reductase subunit C">
    <location>
        <begin position="1"/>
        <end position="130"/>
    </location>
</feature>
<feature type="transmembrane region" description="Helical" evidence="1">
    <location>
        <begin position="34"/>
        <end position="54"/>
    </location>
</feature>
<feature type="transmembrane region" description="Helical" evidence="1">
    <location>
        <begin position="60"/>
        <end position="80"/>
    </location>
</feature>
<feature type="transmembrane region" description="Helical" evidence="1">
    <location>
        <begin position="109"/>
        <end position="129"/>
    </location>
</feature>
<organism>
    <name type="scientific">Serratia proteamaculans (strain 568)</name>
    <dbReference type="NCBI Taxonomy" id="399741"/>
    <lineage>
        <taxon>Bacteria</taxon>
        <taxon>Pseudomonadati</taxon>
        <taxon>Pseudomonadota</taxon>
        <taxon>Gammaproteobacteria</taxon>
        <taxon>Enterobacterales</taxon>
        <taxon>Yersiniaceae</taxon>
        <taxon>Serratia</taxon>
    </lineage>
</organism>
<gene>
    <name evidence="1" type="primary">frdC</name>
    <name type="ordered locus">Spro_0417</name>
</gene>
<protein>
    <recommendedName>
        <fullName evidence="1">Fumarate reductase subunit C</fullName>
    </recommendedName>
    <alternativeName>
        <fullName evidence="1">Fumarate reductase 15 kDa hydrophobic protein</fullName>
    </alternativeName>
    <alternativeName>
        <fullName evidence="1">Quinol-fumarate reductase subunit C</fullName>
        <shortName evidence="1">QFR subunit C</shortName>
    </alternativeName>
</protein>
<keyword id="KW-0997">Cell inner membrane</keyword>
<keyword id="KW-1003">Cell membrane</keyword>
<keyword id="KW-0472">Membrane</keyword>
<keyword id="KW-0812">Transmembrane</keyword>
<keyword id="KW-1133">Transmembrane helix</keyword>
<reference key="1">
    <citation type="submission" date="2007-09" db="EMBL/GenBank/DDBJ databases">
        <title>Complete sequence of chromosome of Serratia proteamaculans 568.</title>
        <authorList>
            <consortium name="US DOE Joint Genome Institute"/>
            <person name="Copeland A."/>
            <person name="Lucas S."/>
            <person name="Lapidus A."/>
            <person name="Barry K."/>
            <person name="Glavina del Rio T."/>
            <person name="Dalin E."/>
            <person name="Tice H."/>
            <person name="Pitluck S."/>
            <person name="Chain P."/>
            <person name="Malfatti S."/>
            <person name="Shin M."/>
            <person name="Vergez L."/>
            <person name="Schmutz J."/>
            <person name="Larimer F."/>
            <person name="Land M."/>
            <person name="Hauser L."/>
            <person name="Kyrpides N."/>
            <person name="Kim E."/>
            <person name="Taghavi S."/>
            <person name="Newman L."/>
            <person name="Vangronsveld J."/>
            <person name="van der Lelie D."/>
            <person name="Richardson P."/>
        </authorList>
    </citation>
    <scope>NUCLEOTIDE SEQUENCE [LARGE SCALE GENOMIC DNA]</scope>
    <source>
        <strain>568</strain>
    </source>
</reference>
<comment type="function">
    <text evidence="1">Two distinct, membrane-bound, FAD-containing enzymes are responsible for the catalysis of fumarate and succinate interconversion; fumarate reductase is used in anaerobic growth, and succinate dehydrogenase is used in aerobic growth. Anchors the catalytic components of the fumarate reductase complex to the cell inner membrane, binds quinones.</text>
</comment>
<comment type="subunit">
    <text evidence="1">Part of an enzyme complex containing four subunits: a flavoprotein (FrdA), an iron-sulfur protein (FrdB), and two hydrophobic anchor proteins (FrdC and FrdD).</text>
</comment>
<comment type="subcellular location">
    <subcellularLocation>
        <location evidence="1">Cell inner membrane</location>
        <topology evidence="1">Multi-pass membrane protein</topology>
    </subcellularLocation>
</comment>
<comment type="similarity">
    <text evidence="1">Belongs to the FrdC family.</text>
</comment>
<proteinExistence type="inferred from homology"/>
<dbReference type="EMBL" id="CP000826">
    <property type="protein sequence ID" value="ABV39525.1"/>
    <property type="molecule type" value="Genomic_DNA"/>
</dbReference>
<dbReference type="SMR" id="A8G8T5"/>
<dbReference type="STRING" id="399741.Spro_0417"/>
<dbReference type="KEGG" id="spe:Spro_0417"/>
<dbReference type="eggNOG" id="COG3029">
    <property type="taxonomic scope" value="Bacteria"/>
</dbReference>
<dbReference type="HOGENOM" id="CLU_156492_0_0_6"/>
<dbReference type="OrthoDB" id="8909678at2"/>
<dbReference type="GO" id="GO:0045283">
    <property type="term" value="C:fumarate reductase complex"/>
    <property type="evidence" value="ECO:0007669"/>
    <property type="project" value="UniProtKB-UniRule"/>
</dbReference>
<dbReference type="GO" id="GO:0005886">
    <property type="term" value="C:plasma membrane"/>
    <property type="evidence" value="ECO:0007669"/>
    <property type="project" value="UniProtKB-SubCell"/>
</dbReference>
<dbReference type="GO" id="GO:0000104">
    <property type="term" value="F:succinate dehydrogenase activity"/>
    <property type="evidence" value="ECO:0007669"/>
    <property type="project" value="UniProtKB-UniRule"/>
</dbReference>
<dbReference type="CDD" id="cd00546">
    <property type="entry name" value="QFR_TypeD_subunitC"/>
    <property type="match status" value="1"/>
</dbReference>
<dbReference type="Gene3D" id="1.20.1300.10">
    <property type="entry name" value="Fumarate reductase/succinate dehydrogenase, transmembrane subunit"/>
    <property type="match status" value="1"/>
</dbReference>
<dbReference type="HAMAP" id="MF_00708">
    <property type="entry name" value="Fumarate_red_C"/>
    <property type="match status" value="1"/>
</dbReference>
<dbReference type="InterPro" id="IPR003510">
    <property type="entry name" value="Fumarate_red_C"/>
</dbReference>
<dbReference type="InterPro" id="IPR034804">
    <property type="entry name" value="SQR/QFR_C/D"/>
</dbReference>
<dbReference type="NCBIfam" id="NF003445">
    <property type="entry name" value="PRK04987.1"/>
    <property type="match status" value="1"/>
</dbReference>
<dbReference type="Pfam" id="PF02300">
    <property type="entry name" value="Fumarate_red_C"/>
    <property type="match status" value="1"/>
</dbReference>
<dbReference type="PIRSF" id="PIRSF000180">
    <property type="entry name" value="FrdC"/>
    <property type="match status" value="1"/>
</dbReference>
<dbReference type="SUPFAM" id="SSF81343">
    <property type="entry name" value="Fumarate reductase respiratory complex transmembrane subunits"/>
    <property type="match status" value="1"/>
</dbReference>